<feature type="chain" id="PRO_0000139519" description="Nitrogenase iron protein 2">
    <location>
        <begin position="1"/>
        <end position="292"/>
    </location>
</feature>
<feature type="binding site" evidence="2">
    <location>
        <begin position="12"/>
        <end position="19"/>
    </location>
    <ligand>
        <name>ATP</name>
        <dbReference type="ChEBI" id="CHEBI:30616"/>
    </ligand>
</feature>
<feature type="binding site" evidence="1">
    <location>
        <position position="97"/>
    </location>
    <ligand>
        <name>[4Fe-4S] cluster</name>
        <dbReference type="ChEBI" id="CHEBI:49883"/>
        <note>ligand shared between dimeric partners</note>
    </ligand>
</feature>
<feature type="binding site" evidence="1">
    <location>
        <position position="133"/>
    </location>
    <ligand>
        <name>[4Fe-4S] cluster</name>
        <dbReference type="ChEBI" id="CHEBI:49883"/>
        <note>ligand shared between dimeric partners</note>
    </ligand>
</feature>
<feature type="modified residue" description="ADP-ribosylarginine; by dinitrogenase reductase ADP-ribosyltransferase" evidence="1">
    <location>
        <position position="100"/>
    </location>
</feature>
<reference key="1">
    <citation type="submission" date="2000-10" db="EMBL/GenBank/DDBJ databases">
        <title>Cloning, DNA sequencing and phylogeny of two nifH-homologous genes from Paenibacillus azotofixans.</title>
        <authorList>
            <person name="Choo Q.C."/>
            <person name="Othman A.S."/>
            <person name="Samian M.R."/>
            <person name="Najimudin N."/>
        </authorList>
    </citation>
    <scope>NUCLEOTIDE SEQUENCE [GENOMIC DNA]</scope>
    <source>
        <strain>ATCC 35681 / DSM 5976 / BCRC 15905 / LMG 14658 / NBRC 16645 / NCIMB 12093 / NRRL B-14372 / P3L-5</strain>
    </source>
</reference>
<protein>
    <recommendedName>
        <fullName>Nitrogenase iron protein 2</fullName>
        <ecNumber>1.18.6.1</ecNumber>
    </recommendedName>
    <alternativeName>
        <fullName>Nitrogenase Fe protein 2</fullName>
    </alternativeName>
    <alternativeName>
        <fullName>Nitrogenase component II</fullName>
    </alternativeName>
    <alternativeName>
        <fullName>Nitrogenase reductase</fullName>
    </alternativeName>
</protein>
<accession>Q9AKT4</accession>
<name>NIFH2_PAEDU</name>
<sequence length="292" mass="31205">MAKKIKQIAIYGKGGIGKSTTTSNISAALSVAGYKVMQFGCDPKSDSTNTLRGGEYIPTVLDTLRDKQIVRAHDVIFEGFNGIYCVEAGGPAPGVGCAGRGIITSVSLLKQQKVFEELDLDYVIYDVLGDVVCGGFAVPVREGIAEHVFTVTSADFMALYAANNLFKGIHKYSTEGGALLGGVIANSINAPYAKEIVDDFVARTHTQVMEYVPRSVSVTQAELQGKTTIEADPNSKQAQIYKSLAQKIVDHTESKVPVPLETSELREWASNWGKQLVELEAGVLSPAAAGNL</sequence>
<proteinExistence type="inferred from homology"/>
<gene>
    <name type="primary">nifH2</name>
</gene>
<keyword id="KW-0004">4Fe-4S</keyword>
<keyword id="KW-0013">ADP-ribosylation</keyword>
<keyword id="KW-0067">ATP-binding</keyword>
<keyword id="KW-0408">Iron</keyword>
<keyword id="KW-0411">Iron-sulfur</keyword>
<keyword id="KW-0479">Metal-binding</keyword>
<keyword id="KW-0535">Nitrogen fixation</keyword>
<keyword id="KW-0547">Nucleotide-binding</keyword>
<keyword id="KW-0560">Oxidoreductase</keyword>
<comment type="function">
    <text evidence="1">The key enzymatic reactions in nitrogen fixation are catalyzed by the nitrogenase complex, which has 2 components: the iron protein and the molybdenum-iron protein.</text>
</comment>
<comment type="catalytic activity">
    <reaction>
        <text>N2 + 8 reduced [2Fe-2S]-[ferredoxin] + 16 ATP + 16 H2O = H2 + 8 oxidized [2Fe-2S]-[ferredoxin] + 2 NH4(+) + 16 ADP + 16 phosphate + 6 H(+)</text>
        <dbReference type="Rhea" id="RHEA:21448"/>
        <dbReference type="Rhea" id="RHEA-COMP:10000"/>
        <dbReference type="Rhea" id="RHEA-COMP:10001"/>
        <dbReference type="ChEBI" id="CHEBI:15377"/>
        <dbReference type="ChEBI" id="CHEBI:15378"/>
        <dbReference type="ChEBI" id="CHEBI:17997"/>
        <dbReference type="ChEBI" id="CHEBI:18276"/>
        <dbReference type="ChEBI" id="CHEBI:28938"/>
        <dbReference type="ChEBI" id="CHEBI:30616"/>
        <dbReference type="ChEBI" id="CHEBI:33737"/>
        <dbReference type="ChEBI" id="CHEBI:33738"/>
        <dbReference type="ChEBI" id="CHEBI:43474"/>
        <dbReference type="ChEBI" id="CHEBI:456216"/>
        <dbReference type="EC" id="1.18.6.1"/>
    </reaction>
</comment>
<comment type="cofactor">
    <cofactor evidence="1">
        <name>[4Fe-4S] cluster</name>
        <dbReference type="ChEBI" id="CHEBI:49883"/>
    </cofactor>
    <text evidence="1">Binds 1 [4Fe-4S] cluster per dimer.</text>
</comment>
<comment type="subunit">
    <text evidence="1">Homodimer.</text>
</comment>
<comment type="PTM">
    <text evidence="1">The reversible ADP-ribosylation of Arg-100 inactivates the nitrogenase reductase and regulates nitrogenase activity.</text>
</comment>
<comment type="similarity">
    <text evidence="3">Belongs to the NifH/BchL/ChlL family.</text>
</comment>
<evidence type="ECO:0000250" key="1"/>
<evidence type="ECO:0000255" key="2"/>
<evidence type="ECO:0000305" key="3"/>
<dbReference type="EC" id="1.18.6.1"/>
<dbReference type="EMBL" id="AJ299454">
    <property type="protein sequence ID" value="CAC27795.1"/>
    <property type="molecule type" value="Genomic_DNA"/>
</dbReference>
<dbReference type="SMR" id="Q9AKT4"/>
<dbReference type="STRING" id="44251.PDUR_13315"/>
<dbReference type="eggNOG" id="COG1348">
    <property type="taxonomic scope" value="Bacteria"/>
</dbReference>
<dbReference type="GO" id="GO:0051539">
    <property type="term" value="F:4 iron, 4 sulfur cluster binding"/>
    <property type="evidence" value="ECO:0007669"/>
    <property type="project" value="UniProtKB-KW"/>
</dbReference>
<dbReference type="GO" id="GO:0005524">
    <property type="term" value="F:ATP binding"/>
    <property type="evidence" value="ECO:0007669"/>
    <property type="project" value="UniProtKB-UniRule"/>
</dbReference>
<dbReference type="GO" id="GO:0046872">
    <property type="term" value="F:metal ion binding"/>
    <property type="evidence" value="ECO:0007669"/>
    <property type="project" value="UniProtKB-KW"/>
</dbReference>
<dbReference type="GO" id="GO:0016163">
    <property type="term" value="F:nitrogenase activity"/>
    <property type="evidence" value="ECO:0007669"/>
    <property type="project" value="UniProtKB-UniRule"/>
</dbReference>
<dbReference type="GO" id="GO:0009399">
    <property type="term" value="P:nitrogen fixation"/>
    <property type="evidence" value="ECO:0007669"/>
    <property type="project" value="UniProtKB-UniRule"/>
</dbReference>
<dbReference type="CDD" id="cd02040">
    <property type="entry name" value="NifH"/>
    <property type="match status" value="1"/>
</dbReference>
<dbReference type="Gene3D" id="3.40.50.300">
    <property type="entry name" value="P-loop containing nucleotide triphosphate hydrolases"/>
    <property type="match status" value="1"/>
</dbReference>
<dbReference type="HAMAP" id="MF_00533">
    <property type="entry name" value="NifH"/>
    <property type="match status" value="1"/>
</dbReference>
<dbReference type="InterPro" id="IPR030655">
    <property type="entry name" value="NifH/chlL_CS"/>
</dbReference>
<dbReference type="InterPro" id="IPR000392">
    <property type="entry name" value="NifH/frxC"/>
</dbReference>
<dbReference type="InterPro" id="IPR005977">
    <property type="entry name" value="Nitrogenase_Fe_NifH"/>
</dbReference>
<dbReference type="InterPro" id="IPR027417">
    <property type="entry name" value="P-loop_NTPase"/>
</dbReference>
<dbReference type="NCBIfam" id="TIGR01287">
    <property type="entry name" value="nifH"/>
    <property type="match status" value="1"/>
</dbReference>
<dbReference type="PANTHER" id="PTHR42864">
    <property type="entry name" value="LIGHT-INDEPENDENT PROTOCHLOROPHYLLIDE REDUCTASE IRON-SULFUR ATP-BINDING PROTEIN"/>
    <property type="match status" value="1"/>
</dbReference>
<dbReference type="PANTHER" id="PTHR42864:SF2">
    <property type="entry name" value="LIGHT-INDEPENDENT PROTOCHLOROPHYLLIDE REDUCTASE IRON-SULFUR ATP-BINDING PROTEIN"/>
    <property type="match status" value="1"/>
</dbReference>
<dbReference type="Pfam" id="PF00142">
    <property type="entry name" value="Fer4_NifH"/>
    <property type="match status" value="1"/>
</dbReference>
<dbReference type="PIRSF" id="PIRSF000363">
    <property type="entry name" value="Nitrogenase_iron"/>
    <property type="match status" value="1"/>
</dbReference>
<dbReference type="PRINTS" id="PR00091">
    <property type="entry name" value="NITROGNASEII"/>
</dbReference>
<dbReference type="SUPFAM" id="SSF52540">
    <property type="entry name" value="P-loop containing nucleoside triphosphate hydrolases"/>
    <property type="match status" value="1"/>
</dbReference>
<dbReference type="PROSITE" id="PS00746">
    <property type="entry name" value="NIFH_FRXC_1"/>
    <property type="match status" value="1"/>
</dbReference>
<dbReference type="PROSITE" id="PS00692">
    <property type="entry name" value="NIFH_FRXC_2"/>
    <property type="match status" value="1"/>
</dbReference>
<dbReference type="PROSITE" id="PS51026">
    <property type="entry name" value="NIFH_FRXC_3"/>
    <property type="match status" value="1"/>
</dbReference>
<organism>
    <name type="scientific">Paenibacillus durus</name>
    <name type="common">Paenibacillus azotofixans</name>
    <dbReference type="NCBI Taxonomy" id="44251"/>
    <lineage>
        <taxon>Bacteria</taxon>
        <taxon>Bacillati</taxon>
        <taxon>Bacillota</taxon>
        <taxon>Bacilli</taxon>
        <taxon>Bacillales</taxon>
        <taxon>Paenibacillaceae</taxon>
        <taxon>Paenibacillus</taxon>
    </lineage>
</organism>